<dbReference type="EMBL" id="AF215043">
    <property type="protein sequence ID" value="AAG60471.1"/>
    <property type="molecule type" value="mRNA"/>
</dbReference>
<dbReference type="SMR" id="Q9BP95"/>
<dbReference type="ConoServer" id="730">
    <property type="toxin name" value="Vn6.16 precursor"/>
</dbReference>
<dbReference type="GO" id="GO:0005576">
    <property type="term" value="C:extracellular region"/>
    <property type="evidence" value="ECO:0007669"/>
    <property type="project" value="UniProtKB-SubCell"/>
</dbReference>
<dbReference type="GO" id="GO:0008200">
    <property type="term" value="F:ion channel inhibitor activity"/>
    <property type="evidence" value="ECO:0007669"/>
    <property type="project" value="InterPro"/>
</dbReference>
<dbReference type="GO" id="GO:0090729">
    <property type="term" value="F:toxin activity"/>
    <property type="evidence" value="ECO:0007669"/>
    <property type="project" value="UniProtKB-KW"/>
</dbReference>
<dbReference type="InterPro" id="IPR004214">
    <property type="entry name" value="Conotoxin"/>
</dbReference>
<dbReference type="Pfam" id="PF02950">
    <property type="entry name" value="Conotoxin"/>
    <property type="match status" value="1"/>
</dbReference>
<name>O1616_CONVE</name>
<accession>Q9BP95</accession>
<organism>
    <name type="scientific">Conus ventricosus</name>
    <name type="common">Mediterranean cone</name>
    <dbReference type="NCBI Taxonomy" id="117992"/>
    <lineage>
        <taxon>Eukaryota</taxon>
        <taxon>Metazoa</taxon>
        <taxon>Spiralia</taxon>
        <taxon>Lophotrochozoa</taxon>
        <taxon>Mollusca</taxon>
        <taxon>Gastropoda</taxon>
        <taxon>Caenogastropoda</taxon>
        <taxon>Neogastropoda</taxon>
        <taxon>Conoidea</taxon>
        <taxon>Conidae</taxon>
        <taxon>Conus</taxon>
        <taxon>Lautoconus</taxon>
    </lineage>
</organism>
<comment type="subcellular location">
    <subcellularLocation>
        <location evidence="1">Secreted</location>
    </subcellularLocation>
</comment>
<comment type="tissue specificity">
    <text>Expressed by the venom duct.</text>
</comment>
<comment type="domain">
    <text evidence="1">The presence of a 'disulfide through disulfide knot' structurally defines this protein as a knottin.</text>
</comment>
<comment type="domain">
    <text>The cysteine framework is VI/VII (C-C-CC-C-C).</text>
</comment>
<comment type="similarity">
    <text evidence="3">Belongs to the conotoxin O1 superfamily.</text>
</comment>
<evidence type="ECO:0000250" key="1"/>
<evidence type="ECO:0000255" key="2"/>
<evidence type="ECO:0000305" key="3"/>
<protein>
    <recommendedName>
        <fullName>Conotoxin VnMKLT2-011</fullName>
    </recommendedName>
</protein>
<sequence>MMKLTCVLIIAVLFLTACQLTTAETRDEYRAVRSSDEVRNSRSCSGSGYGCKNTPCCAGLTCRGPRQGPICL</sequence>
<proteinExistence type="evidence at transcript level"/>
<keyword id="KW-1015">Disulfide bond</keyword>
<keyword id="KW-0960">Knottin</keyword>
<keyword id="KW-0528">Neurotoxin</keyword>
<keyword id="KW-0964">Secreted</keyword>
<keyword id="KW-0732">Signal</keyword>
<keyword id="KW-0800">Toxin</keyword>
<reference key="1">
    <citation type="journal article" date="2001" name="Mol. Biol. Evol.">
        <title>Mechanisms for evolving hypervariability: the case of conopeptides.</title>
        <authorList>
            <person name="Conticello S.G."/>
            <person name="Gilad Y."/>
            <person name="Avidan N."/>
            <person name="Ben-Asher E."/>
            <person name="Levy Z."/>
            <person name="Fainzilber M."/>
        </authorList>
    </citation>
    <scope>NUCLEOTIDE SEQUENCE [MRNA]</scope>
    <source>
        <tissue>Venom duct</tissue>
    </source>
</reference>
<feature type="signal peptide" evidence="2">
    <location>
        <begin position="1"/>
        <end position="23"/>
    </location>
</feature>
<feature type="propeptide" id="PRO_0000404750" evidence="1">
    <location>
        <begin position="24"/>
        <end position="42"/>
    </location>
</feature>
<feature type="peptide" id="PRO_0000404751" description="Conotoxin VnMKLT2-011">
    <location>
        <begin position="43"/>
        <end position="72"/>
    </location>
</feature>
<feature type="disulfide bond" evidence="1">
    <location>
        <begin position="44"/>
        <end position="57"/>
    </location>
</feature>
<feature type="disulfide bond" evidence="1">
    <location>
        <begin position="51"/>
        <end position="62"/>
    </location>
</feature>
<feature type="disulfide bond" evidence="1">
    <location>
        <begin position="56"/>
        <end position="71"/>
    </location>
</feature>